<protein>
    <recommendedName>
        <fullName evidence="1">ATP synthase subunit alpha</fullName>
        <ecNumber evidence="1">7.1.2.2</ecNumber>
    </recommendedName>
    <alternativeName>
        <fullName evidence="1">ATP synthase F1 sector subunit alpha</fullName>
    </alternativeName>
    <alternativeName>
        <fullName evidence="1">F-ATPase subunit alpha</fullName>
    </alternativeName>
</protein>
<name>ATPA_XANE5</name>
<keyword id="KW-0066">ATP synthesis</keyword>
<keyword id="KW-0067">ATP-binding</keyword>
<keyword id="KW-0997">Cell inner membrane</keyword>
<keyword id="KW-1003">Cell membrane</keyword>
<keyword id="KW-0139">CF(1)</keyword>
<keyword id="KW-0375">Hydrogen ion transport</keyword>
<keyword id="KW-0406">Ion transport</keyword>
<keyword id="KW-0472">Membrane</keyword>
<keyword id="KW-0547">Nucleotide-binding</keyword>
<keyword id="KW-1278">Translocase</keyword>
<keyword id="KW-0813">Transport</keyword>
<comment type="function">
    <text evidence="1">Produces ATP from ADP in the presence of a proton gradient across the membrane. The alpha chain is a regulatory subunit.</text>
</comment>
<comment type="catalytic activity">
    <reaction evidence="1">
        <text>ATP + H2O + 4 H(+)(in) = ADP + phosphate + 5 H(+)(out)</text>
        <dbReference type="Rhea" id="RHEA:57720"/>
        <dbReference type="ChEBI" id="CHEBI:15377"/>
        <dbReference type="ChEBI" id="CHEBI:15378"/>
        <dbReference type="ChEBI" id="CHEBI:30616"/>
        <dbReference type="ChEBI" id="CHEBI:43474"/>
        <dbReference type="ChEBI" id="CHEBI:456216"/>
        <dbReference type="EC" id="7.1.2.2"/>
    </reaction>
</comment>
<comment type="subunit">
    <text evidence="1">F-type ATPases have 2 components, CF(1) - the catalytic core - and CF(0) - the membrane proton channel. CF(1) has five subunits: alpha(3), beta(3), gamma(1), delta(1), epsilon(1). CF(0) has three main subunits: a(1), b(2) and c(9-12). The alpha and beta chains form an alternating ring which encloses part of the gamma chain. CF(1) is attached to CF(0) by a central stalk formed by the gamma and epsilon chains, while a peripheral stalk is formed by the delta and b chains.</text>
</comment>
<comment type="subcellular location">
    <subcellularLocation>
        <location evidence="1">Cell inner membrane</location>
        <topology evidence="1">Peripheral membrane protein</topology>
    </subcellularLocation>
</comment>
<comment type="similarity">
    <text evidence="1">Belongs to the ATPase alpha/beta chains family.</text>
</comment>
<organism>
    <name type="scientific">Xanthomonas euvesicatoria pv. vesicatoria (strain 85-10)</name>
    <name type="common">Xanthomonas campestris pv. vesicatoria</name>
    <dbReference type="NCBI Taxonomy" id="316273"/>
    <lineage>
        <taxon>Bacteria</taxon>
        <taxon>Pseudomonadati</taxon>
        <taxon>Pseudomonadota</taxon>
        <taxon>Gammaproteobacteria</taxon>
        <taxon>Lysobacterales</taxon>
        <taxon>Lysobacteraceae</taxon>
        <taxon>Xanthomonas</taxon>
    </lineage>
</organism>
<feature type="chain" id="PRO_0000238405" description="ATP synthase subunit alpha">
    <location>
        <begin position="1"/>
        <end position="515"/>
    </location>
</feature>
<feature type="binding site" evidence="1">
    <location>
        <begin position="171"/>
        <end position="178"/>
    </location>
    <ligand>
        <name>ATP</name>
        <dbReference type="ChEBI" id="CHEBI:30616"/>
    </ligand>
</feature>
<feature type="site" description="Required for activity" evidence="1">
    <location>
        <position position="375"/>
    </location>
</feature>
<sequence length="515" mass="55285">MATTLNPSEISDLIKTRIEAVKLSAESRNEGSVTSVSDGIVRIFGLADVMQGEMIELPNNTFALALNLERDSVGAVVLGDYESLREGDVAKTTGRILEVPVGPELLGRVVNALGEPIDGKGPLGATQTAPVERVAPGVIWRKSVDQPVQTGYKSVDAMIPIGRGQRELVIGDRQTGKTALAIDAVINQKGTGIKCVYVAIGQKASTVANIVRKLEENGALAHTVVVAATASESAAMQYISPYAGCTMGEYFMDRGEDALIVYDDLSKQAVAYRQISLLLKRPPGREAYPGDVFYLHSRLLERAARVSEEYVEKFTNGAVTGKTGSLTALPIIETQAGDVSAFVPTNVISITDGQIFLETDLFNAGIRPAVNAGISVSRVGGAAQTKIIKKLSGGIRISLAQYRELAAFAQFASDLDEATRKQLERGQRVTELMKQKQYAPMSIANQALSIYAVNEGYLDDVPVNKLLAFEEGLHAHFANTQGELVSKINSTGGWDNDIEASFKKGIEEFKTTGSW</sequence>
<reference key="1">
    <citation type="journal article" date="2005" name="J. Bacteriol.">
        <title>Insights into genome plasticity and pathogenicity of the plant pathogenic Bacterium Xanthomonas campestris pv. vesicatoria revealed by the complete genome sequence.</title>
        <authorList>
            <person name="Thieme F."/>
            <person name="Koebnik R."/>
            <person name="Bekel T."/>
            <person name="Berger C."/>
            <person name="Boch J."/>
            <person name="Buettner D."/>
            <person name="Caldana C."/>
            <person name="Gaigalat L."/>
            <person name="Goesmann A."/>
            <person name="Kay S."/>
            <person name="Kirchner O."/>
            <person name="Lanz C."/>
            <person name="Linke B."/>
            <person name="McHardy A.C."/>
            <person name="Meyer F."/>
            <person name="Mittenhuber G."/>
            <person name="Nies D.H."/>
            <person name="Niesbach-Kloesgen U."/>
            <person name="Patschkowski T."/>
            <person name="Rueckert C."/>
            <person name="Rupp O."/>
            <person name="Schneiker S."/>
            <person name="Schuster S.C."/>
            <person name="Vorhoelter F.J."/>
            <person name="Weber E."/>
            <person name="Puehler A."/>
            <person name="Bonas U."/>
            <person name="Bartels D."/>
            <person name="Kaiser O."/>
        </authorList>
    </citation>
    <scope>NUCLEOTIDE SEQUENCE [LARGE SCALE GENOMIC DNA]</scope>
    <source>
        <strain>85-10</strain>
    </source>
</reference>
<evidence type="ECO:0000255" key="1">
    <source>
        <dbReference type="HAMAP-Rule" id="MF_01346"/>
    </source>
</evidence>
<dbReference type="EC" id="7.1.2.2" evidence="1"/>
<dbReference type="EMBL" id="AM039952">
    <property type="protein sequence ID" value="CAJ25500.1"/>
    <property type="molecule type" value="Genomic_DNA"/>
</dbReference>
<dbReference type="RefSeq" id="WP_003484004.1">
    <property type="nucleotide sequence ID" value="NZ_CP017190.1"/>
</dbReference>
<dbReference type="SMR" id="Q3BP13"/>
<dbReference type="STRING" id="456327.BJD11_03820"/>
<dbReference type="GeneID" id="97511842"/>
<dbReference type="KEGG" id="xcv:XCV3769"/>
<dbReference type="eggNOG" id="COG0056">
    <property type="taxonomic scope" value="Bacteria"/>
</dbReference>
<dbReference type="HOGENOM" id="CLU_010091_2_1_6"/>
<dbReference type="Proteomes" id="UP000007069">
    <property type="component" value="Chromosome"/>
</dbReference>
<dbReference type="GO" id="GO:0005886">
    <property type="term" value="C:plasma membrane"/>
    <property type="evidence" value="ECO:0007669"/>
    <property type="project" value="UniProtKB-SubCell"/>
</dbReference>
<dbReference type="GO" id="GO:0045259">
    <property type="term" value="C:proton-transporting ATP synthase complex"/>
    <property type="evidence" value="ECO:0007669"/>
    <property type="project" value="UniProtKB-KW"/>
</dbReference>
<dbReference type="GO" id="GO:0043531">
    <property type="term" value="F:ADP binding"/>
    <property type="evidence" value="ECO:0007669"/>
    <property type="project" value="TreeGrafter"/>
</dbReference>
<dbReference type="GO" id="GO:0005524">
    <property type="term" value="F:ATP binding"/>
    <property type="evidence" value="ECO:0007669"/>
    <property type="project" value="UniProtKB-UniRule"/>
</dbReference>
<dbReference type="GO" id="GO:0046933">
    <property type="term" value="F:proton-transporting ATP synthase activity, rotational mechanism"/>
    <property type="evidence" value="ECO:0007669"/>
    <property type="project" value="UniProtKB-UniRule"/>
</dbReference>
<dbReference type="CDD" id="cd18113">
    <property type="entry name" value="ATP-synt_F1_alpha_C"/>
    <property type="match status" value="1"/>
</dbReference>
<dbReference type="CDD" id="cd18116">
    <property type="entry name" value="ATP-synt_F1_alpha_N"/>
    <property type="match status" value="1"/>
</dbReference>
<dbReference type="CDD" id="cd01132">
    <property type="entry name" value="F1-ATPase_alpha_CD"/>
    <property type="match status" value="1"/>
</dbReference>
<dbReference type="FunFam" id="1.20.150.20:FF:000001">
    <property type="entry name" value="ATP synthase subunit alpha"/>
    <property type="match status" value="1"/>
</dbReference>
<dbReference type="FunFam" id="2.40.30.20:FF:000001">
    <property type="entry name" value="ATP synthase subunit alpha"/>
    <property type="match status" value="1"/>
</dbReference>
<dbReference type="FunFam" id="3.40.50.300:FF:000002">
    <property type="entry name" value="ATP synthase subunit alpha"/>
    <property type="match status" value="1"/>
</dbReference>
<dbReference type="Gene3D" id="2.40.30.20">
    <property type="match status" value="1"/>
</dbReference>
<dbReference type="Gene3D" id="1.20.150.20">
    <property type="entry name" value="ATP synthase alpha/beta chain, C-terminal domain"/>
    <property type="match status" value="1"/>
</dbReference>
<dbReference type="Gene3D" id="3.40.50.300">
    <property type="entry name" value="P-loop containing nucleotide triphosphate hydrolases"/>
    <property type="match status" value="1"/>
</dbReference>
<dbReference type="HAMAP" id="MF_01346">
    <property type="entry name" value="ATP_synth_alpha_bact"/>
    <property type="match status" value="1"/>
</dbReference>
<dbReference type="InterPro" id="IPR023366">
    <property type="entry name" value="ATP_synth_asu-like_sf"/>
</dbReference>
<dbReference type="InterPro" id="IPR000793">
    <property type="entry name" value="ATP_synth_asu_C"/>
</dbReference>
<dbReference type="InterPro" id="IPR038376">
    <property type="entry name" value="ATP_synth_asu_C_sf"/>
</dbReference>
<dbReference type="InterPro" id="IPR033732">
    <property type="entry name" value="ATP_synth_F1_a_nt-bd_dom"/>
</dbReference>
<dbReference type="InterPro" id="IPR005294">
    <property type="entry name" value="ATP_synth_F1_asu"/>
</dbReference>
<dbReference type="InterPro" id="IPR020003">
    <property type="entry name" value="ATPase_a/bsu_AS"/>
</dbReference>
<dbReference type="InterPro" id="IPR004100">
    <property type="entry name" value="ATPase_F1/V1/A1_a/bsu_N"/>
</dbReference>
<dbReference type="InterPro" id="IPR036121">
    <property type="entry name" value="ATPase_F1/V1/A1_a/bsu_N_sf"/>
</dbReference>
<dbReference type="InterPro" id="IPR000194">
    <property type="entry name" value="ATPase_F1/V1/A1_a/bsu_nucl-bd"/>
</dbReference>
<dbReference type="InterPro" id="IPR027417">
    <property type="entry name" value="P-loop_NTPase"/>
</dbReference>
<dbReference type="NCBIfam" id="TIGR00962">
    <property type="entry name" value="atpA"/>
    <property type="match status" value="1"/>
</dbReference>
<dbReference type="NCBIfam" id="NF009884">
    <property type="entry name" value="PRK13343.1"/>
    <property type="match status" value="1"/>
</dbReference>
<dbReference type="PANTHER" id="PTHR48082">
    <property type="entry name" value="ATP SYNTHASE SUBUNIT ALPHA, MITOCHONDRIAL"/>
    <property type="match status" value="1"/>
</dbReference>
<dbReference type="PANTHER" id="PTHR48082:SF2">
    <property type="entry name" value="ATP SYNTHASE SUBUNIT ALPHA, MITOCHONDRIAL"/>
    <property type="match status" value="1"/>
</dbReference>
<dbReference type="Pfam" id="PF00006">
    <property type="entry name" value="ATP-synt_ab"/>
    <property type="match status" value="1"/>
</dbReference>
<dbReference type="Pfam" id="PF00306">
    <property type="entry name" value="ATP-synt_ab_C"/>
    <property type="match status" value="1"/>
</dbReference>
<dbReference type="Pfam" id="PF02874">
    <property type="entry name" value="ATP-synt_ab_N"/>
    <property type="match status" value="1"/>
</dbReference>
<dbReference type="SUPFAM" id="SSF47917">
    <property type="entry name" value="C-terminal domain of alpha and beta subunits of F1 ATP synthase"/>
    <property type="match status" value="1"/>
</dbReference>
<dbReference type="SUPFAM" id="SSF50615">
    <property type="entry name" value="N-terminal domain of alpha and beta subunits of F1 ATP synthase"/>
    <property type="match status" value="1"/>
</dbReference>
<dbReference type="SUPFAM" id="SSF52540">
    <property type="entry name" value="P-loop containing nucleoside triphosphate hydrolases"/>
    <property type="match status" value="1"/>
</dbReference>
<dbReference type="PROSITE" id="PS00152">
    <property type="entry name" value="ATPASE_ALPHA_BETA"/>
    <property type="match status" value="1"/>
</dbReference>
<accession>Q3BP13</accession>
<proteinExistence type="inferred from homology"/>
<gene>
    <name evidence="1" type="primary">atpA</name>
    <name type="ordered locus">XCV3769</name>
</gene>